<sequence length="757" mass="86408">MDVNPTLLFLKVPAQNAISTTFPYTGDPPYSHGTGTGYTMDTVNRTHQYSEKGKWTTNTETGAPQLNPIDGPLPEDNEPSGYAQTDCVLEAMAFLEESHPGIFENSCLETMEIVQQTRVDKLTQGRQTYDWTLNRNQPAATALANTIEVFRSNGLTANESGRLIDSLKDVMESMDKEEMEITTHFQRKRRVRDNMTKKMVTQRTIGKKKQRLNKRSYLIRALTLNTMTKDAERGKLKRRAIATPGMQIRGFVYFVETLARSICEKLEQSGLPVGGNEKKAKLANVVRKMMTNSQDTELSFTITGDNTKWNENQNPRMFLAMITYITRNQPEWFRNVLSIAPIMFSNKMARLGKGYMFESKSMKLRTQIPAEMLASIDLKYFNESTRKKIERIRPLLIDGTASLSPGMMMGMFNMLSTVLGVSILNLGQKRYTKTTYWWDGLQSSDDFALIVNAPNHEGIQAGVDRFYRTCKLVGINMSKKKSYINRTGTFEFTSFFYRYGFVANFSMELPSFGVSGINESADMSIGVTVIKNNMINNDLGPATAQMALQLFIKDYRYTYRCHRGDTQIQTRRSFELKKLWEQTRSKAGLLVSDGGPNLYNIRNLHIPEVCLKWELMDEDYQGRLCNPLNPFVSHKEIESVNNAVVMPAHGPAKSMEYDAVATTHSWIPKRNRSILNTSQRGILEDEQMYQKCCNLFEKFFPSSSYRRPVGISSMVEAMVSRARIDARIDFESGRIKKEEFAEIMKICSTIEELRRQK</sequence>
<feature type="chain" id="PRO_0000279592" description="RNA-directed RNA polymerase catalytic subunit">
    <location>
        <begin position="1"/>
        <end position="757"/>
    </location>
</feature>
<feature type="domain" description="RdRp catalytic" evidence="1">
    <location>
        <begin position="286"/>
        <end position="483"/>
    </location>
</feature>
<feature type="region of interest" description="Disordered" evidence="2">
    <location>
        <begin position="50"/>
        <end position="82"/>
    </location>
</feature>
<feature type="region of interest" description="Promoter-binding site" evidence="1">
    <location>
        <begin position="249"/>
        <end position="256"/>
    </location>
</feature>
<feature type="short sequence motif" description="Nuclear localization signal" evidence="1">
    <location>
        <begin position="187"/>
        <end position="195"/>
    </location>
</feature>
<feature type="short sequence motif" description="Nuclear localization signal" evidence="1">
    <location>
        <begin position="203"/>
        <end position="216"/>
    </location>
</feature>
<feature type="compositionally biased region" description="Polar residues" evidence="2">
    <location>
        <begin position="55"/>
        <end position="64"/>
    </location>
</feature>
<comment type="function">
    <text evidence="1">RNA-dependent RNA polymerase which is responsible for replication and transcription of virus RNA segments. The transcription of viral mRNAs occurs by a unique mechanism called cap-snatching. 5' methylated caps of cellular mRNAs are cleaved after 10-13 nucleotides by PA. In turn, these short capped RNAs are used as primers by PB1 for transcription of viral mRNAs. During virus replication, PB1 initiates RNA synthesis and copy vRNA into complementary RNA (cRNA) which in turn serves as a template for the production of more vRNAs.</text>
</comment>
<comment type="catalytic activity">
    <reaction evidence="1">
        <text>RNA(n) + a ribonucleoside 5'-triphosphate = RNA(n+1) + diphosphate</text>
        <dbReference type="Rhea" id="RHEA:21248"/>
        <dbReference type="Rhea" id="RHEA-COMP:14527"/>
        <dbReference type="Rhea" id="RHEA-COMP:17342"/>
        <dbReference type="ChEBI" id="CHEBI:33019"/>
        <dbReference type="ChEBI" id="CHEBI:61557"/>
        <dbReference type="ChEBI" id="CHEBI:140395"/>
        <dbReference type="EC" id="2.7.7.48"/>
    </reaction>
</comment>
<comment type="subunit">
    <text evidence="1">Influenza RNA polymerase is composed of three subunits: PB1, PB2 and PA. Interacts (via N-terminus) with PA (via C-terminus). Interacts (via C-terminus) with PB2 (via N-terminus); this interaction is essential for transcription initiation.</text>
</comment>
<comment type="subcellular location">
    <subcellularLocation>
        <location evidence="1">Host nucleus</location>
    </subcellularLocation>
    <subcellularLocation>
        <location evidence="1">Host cytoplasm</location>
    </subcellularLocation>
</comment>
<comment type="PTM">
    <text evidence="1">Phosphorylated by host PRKCA.</text>
</comment>
<comment type="similarity">
    <text evidence="1">Belongs to the influenza viruses polymerase PB1 family.</text>
</comment>
<accession>Q0A429</accession>
<dbReference type="EC" id="2.7.7.48" evidence="1"/>
<dbReference type="EMBL" id="CY014685">
    <property type="protein sequence ID" value="ABI84553.1"/>
    <property type="molecule type" value="Genomic_RNA"/>
</dbReference>
<dbReference type="SMR" id="Q0A429"/>
<dbReference type="Proteomes" id="UP000155465">
    <property type="component" value="Genome"/>
</dbReference>
<dbReference type="GO" id="GO:0030430">
    <property type="term" value="C:host cell cytoplasm"/>
    <property type="evidence" value="ECO:0007669"/>
    <property type="project" value="UniProtKB-SubCell"/>
</dbReference>
<dbReference type="GO" id="GO:0042025">
    <property type="term" value="C:host cell nucleus"/>
    <property type="evidence" value="ECO:0007669"/>
    <property type="project" value="UniProtKB-SubCell"/>
</dbReference>
<dbReference type="GO" id="GO:0000166">
    <property type="term" value="F:nucleotide binding"/>
    <property type="evidence" value="ECO:0007669"/>
    <property type="project" value="UniProtKB-UniRule"/>
</dbReference>
<dbReference type="GO" id="GO:0003723">
    <property type="term" value="F:RNA binding"/>
    <property type="evidence" value="ECO:0007669"/>
    <property type="project" value="InterPro"/>
</dbReference>
<dbReference type="GO" id="GO:0003968">
    <property type="term" value="F:RNA-directed RNA polymerase activity"/>
    <property type="evidence" value="ECO:0007669"/>
    <property type="project" value="UniProtKB-UniRule"/>
</dbReference>
<dbReference type="GO" id="GO:0006351">
    <property type="term" value="P:DNA-templated transcription"/>
    <property type="evidence" value="ECO:0007669"/>
    <property type="project" value="UniProtKB-UniRule"/>
</dbReference>
<dbReference type="GO" id="GO:0039657">
    <property type="term" value="P:symbiont-mediated suppression of host gene expression"/>
    <property type="evidence" value="ECO:0007669"/>
    <property type="project" value="UniProtKB-KW"/>
</dbReference>
<dbReference type="GO" id="GO:0039523">
    <property type="term" value="P:symbiont-mediated suppression of host mRNA transcription via inhibition of RNA polymerase II activity"/>
    <property type="evidence" value="ECO:0007669"/>
    <property type="project" value="UniProtKB-UniRule"/>
</dbReference>
<dbReference type="GO" id="GO:0039694">
    <property type="term" value="P:viral RNA genome replication"/>
    <property type="evidence" value="ECO:0007669"/>
    <property type="project" value="UniProtKB-UniRule"/>
</dbReference>
<dbReference type="GO" id="GO:0019083">
    <property type="term" value="P:viral transcription"/>
    <property type="evidence" value="ECO:0007669"/>
    <property type="project" value="UniProtKB-KW"/>
</dbReference>
<dbReference type="Gene3D" id="6.10.140.720">
    <property type="match status" value="1"/>
</dbReference>
<dbReference type="HAMAP" id="MF_04065">
    <property type="entry name" value="INFV_RDRP"/>
    <property type="match status" value="1"/>
</dbReference>
<dbReference type="InterPro" id="IPR007099">
    <property type="entry name" value="RNA-dir_pol_NSvirus"/>
</dbReference>
<dbReference type="InterPro" id="IPR001407">
    <property type="entry name" value="RNA_pol_PB1_influenza"/>
</dbReference>
<dbReference type="Pfam" id="PF00602">
    <property type="entry name" value="Flu_PB1"/>
    <property type="match status" value="1"/>
</dbReference>
<dbReference type="PIRSF" id="PIRSF000827">
    <property type="entry name" value="RdRPol_OMV"/>
    <property type="match status" value="1"/>
</dbReference>
<dbReference type="PROSITE" id="PS50525">
    <property type="entry name" value="RDRP_SSRNA_NEG_SEG"/>
    <property type="match status" value="1"/>
</dbReference>
<keyword id="KW-1262">Eukaryotic host gene expression shutoff by virus</keyword>
<keyword id="KW-1191">Eukaryotic host transcription shutoff by virus</keyword>
<keyword id="KW-1035">Host cytoplasm</keyword>
<keyword id="KW-1190">Host gene expression shutoff by virus</keyword>
<keyword id="KW-1048">Host nucleus</keyword>
<keyword id="KW-0945">Host-virus interaction</keyword>
<keyword id="KW-1104">Inhibition of host RNA polymerase II by virus</keyword>
<keyword id="KW-0547">Nucleotide-binding</keyword>
<keyword id="KW-0548">Nucleotidyltransferase</keyword>
<keyword id="KW-0597">Phosphoprotein</keyword>
<keyword id="KW-0696">RNA-directed RNA polymerase</keyword>
<keyword id="KW-0808">Transferase</keyword>
<keyword id="KW-0693">Viral RNA replication</keyword>
<keyword id="KW-1195">Viral transcription</keyword>
<proteinExistence type="inferred from homology"/>
<organismHost>
    <name type="scientific">Aves</name>
    <dbReference type="NCBI Taxonomy" id="8782"/>
</organismHost>
<name>RDRP_I56A2</name>
<reference key="1">
    <citation type="journal article" date="2006" name="Science">
        <title>Large-scale sequence analysis of avian influenza isolates.</title>
        <authorList>
            <person name="Obenauer J.C."/>
            <person name="Denson J."/>
            <person name="Mehta P.K."/>
            <person name="Su X."/>
            <person name="Mukatira S."/>
            <person name="Finkelstein D.B."/>
            <person name="Xu X."/>
            <person name="Wang J."/>
            <person name="Ma J."/>
            <person name="Fan Y."/>
            <person name="Rakestraw K.M."/>
            <person name="Webster R.G."/>
            <person name="Hoffmann E."/>
            <person name="Krauss S."/>
            <person name="Zheng J."/>
            <person name="Zhang Z."/>
            <person name="Naeve C.W."/>
        </authorList>
    </citation>
    <scope>NUCLEOTIDE SEQUENCE [GENOMIC RNA]</scope>
</reference>
<gene>
    <name evidence="1" type="primary">PB1</name>
</gene>
<protein>
    <recommendedName>
        <fullName evidence="1">RNA-directed RNA polymerase catalytic subunit</fullName>
        <ecNumber evidence="1">2.7.7.48</ecNumber>
    </recommendedName>
    <alternativeName>
        <fullName evidence="1">Polymerase basic protein 1</fullName>
        <shortName evidence="1">PB1</shortName>
    </alternativeName>
    <alternativeName>
        <fullName evidence="1">RNA-directed RNA polymerase subunit P1</fullName>
    </alternativeName>
</protein>
<evidence type="ECO:0000255" key="1">
    <source>
        <dbReference type="HAMAP-Rule" id="MF_04065"/>
    </source>
</evidence>
<evidence type="ECO:0000256" key="2">
    <source>
        <dbReference type="SAM" id="MobiDB-lite"/>
    </source>
</evidence>
<organism>
    <name type="scientific">Influenza A virus (strain A/Duck/England/1/1956 H11N6)</name>
    <dbReference type="NCBI Taxonomy" id="383550"/>
    <lineage>
        <taxon>Viruses</taxon>
        <taxon>Riboviria</taxon>
        <taxon>Orthornavirae</taxon>
        <taxon>Negarnaviricota</taxon>
        <taxon>Polyploviricotina</taxon>
        <taxon>Insthoviricetes</taxon>
        <taxon>Articulavirales</taxon>
        <taxon>Orthomyxoviridae</taxon>
        <taxon>Alphainfluenzavirus</taxon>
        <taxon>Alphainfluenzavirus influenzae</taxon>
        <taxon>Influenza A virus</taxon>
    </lineage>
</organism>